<evidence type="ECO:0000250" key="1"/>
<evidence type="ECO:0000305" key="2"/>
<proteinExistence type="inferred from homology"/>
<reference key="1">
    <citation type="journal article" date="2002" name="Nucleic Acids Res.">
        <title>Genome sequence of Shigella flexneri 2a: insights into pathogenicity through comparison with genomes of Escherichia coli K12 and O157.</title>
        <authorList>
            <person name="Jin Q."/>
            <person name="Yuan Z."/>
            <person name="Xu J."/>
            <person name="Wang Y."/>
            <person name="Shen Y."/>
            <person name="Lu W."/>
            <person name="Wang J."/>
            <person name="Liu H."/>
            <person name="Yang J."/>
            <person name="Yang F."/>
            <person name="Zhang X."/>
            <person name="Zhang J."/>
            <person name="Yang G."/>
            <person name="Wu H."/>
            <person name="Qu D."/>
            <person name="Dong J."/>
            <person name="Sun L."/>
            <person name="Xue Y."/>
            <person name="Zhao A."/>
            <person name="Gao Y."/>
            <person name="Zhu J."/>
            <person name="Kan B."/>
            <person name="Ding K."/>
            <person name="Chen S."/>
            <person name="Cheng H."/>
            <person name="Yao Z."/>
            <person name="He B."/>
            <person name="Chen R."/>
            <person name="Ma D."/>
            <person name="Qiang B."/>
            <person name="Wen Y."/>
            <person name="Hou Y."/>
            <person name="Yu J."/>
        </authorList>
    </citation>
    <scope>NUCLEOTIDE SEQUENCE [LARGE SCALE GENOMIC DNA]</scope>
    <source>
        <strain>301 / Serotype 2a</strain>
    </source>
</reference>
<reference key="2">
    <citation type="journal article" date="2003" name="Infect. Immun.">
        <title>Complete genome sequence and comparative genomics of Shigella flexneri serotype 2a strain 2457T.</title>
        <authorList>
            <person name="Wei J."/>
            <person name="Goldberg M.B."/>
            <person name="Burland V."/>
            <person name="Venkatesan M.M."/>
            <person name="Deng W."/>
            <person name="Fournier G."/>
            <person name="Mayhew G.F."/>
            <person name="Plunkett G. III"/>
            <person name="Rose D.J."/>
            <person name="Darling A."/>
            <person name="Mau B."/>
            <person name="Perna N.T."/>
            <person name="Payne S.M."/>
            <person name="Runyen-Janecky L.J."/>
            <person name="Zhou S."/>
            <person name="Schwartz D.C."/>
            <person name="Blattner F.R."/>
        </authorList>
    </citation>
    <scope>NUCLEOTIDE SEQUENCE [LARGE SCALE GENOMIC DNA]</scope>
    <source>
        <strain>ATCC 700930 / 2457T / Serotype 2a</strain>
    </source>
</reference>
<sequence length="121" mass="13773">MMSTTLFKDFTFEAAHRLPHVPEGHKCGRLHGHSFMVRLEITGEVDPHTGWIIDFAELKAAFKPTYERLDHHYLNDIPGLENPTSEVLAKWIWDQVKPVVPLLSAVMVKETCTAGCIYRGE</sequence>
<dbReference type="EC" id="4.1.2.50"/>
<dbReference type="EMBL" id="AE005674">
    <property type="protein sequence ID" value="AAN44270.2"/>
    <property type="status" value="ALT_INIT"/>
    <property type="molecule type" value="Genomic_DNA"/>
</dbReference>
<dbReference type="EMBL" id="AE014073">
    <property type="protein sequence ID" value="AAP18095.1"/>
    <property type="status" value="ALT_INIT"/>
    <property type="molecule type" value="Genomic_DNA"/>
</dbReference>
<dbReference type="RefSeq" id="NP_708563.2">
    <property type="nucleotide sequence ID" value="NC_004337.2"/>
</dbReference>
<dbReference type="SMR" id="P65872"/>
<dbReference type="STRING" id="198214.SF2781"/>
<dbReference type="PaxDb" id="198214-SF2781"/>
<dbReference type="GeneID" id="1025773"/>
<dbReference type="KEGG" id="sfl:SF2781"/>
<dbReference type="KEGG" id="sfx:S2974"/>
<dbReference type="PATRIC" id="fig|198214.7.peg.3310"/>
<dbReference type="HOGENOM" id="CLU_111016_6_1_6"/>
<dbReference type="UniPathway" id="UPA00391"/>
<dbReference type="Proteomes" id="UP000001006">
    <property type="component" value="Chromosome"/>
</dbReference>
<dbReference type="Proteomes" id="UP000002673">
    <property type="component" value="Chromosome"/>
</dbReference>
<dbReference type="GO" id="GO:0070497">
    <property type="term" value="F:6-carboxytetrahydropterin synthase activity"/>
    <property type="evidence" value="ECO:0007669"/>
    <property type="project" value="UniProtKB-EC"/>
</dbReference>
<dbReference type="GO" id="GO:0046872">
    <property type="term" value="F:metal ion binding"/>
    <property type="evidence" value="ECO:0007669"/>
    <property type="project" value="UniProtKB-KW"/>
</dbReference>
<dbReference type="GO" id="GO:0008616">
    <property type="term" value="P:queuosine biosynthetic process"/>
    <property type="evidence" value="ECO:0007669"/>
    <property type="project" value="UniProtKB-KW"/>
</dbReference>
<dbReference type="FunFam" id="3.30.479.10:FF:000001">
    <property type="entry name" value="6-carboxy-5,6,7,8-tetrahydropterin synthase"/>
    <property type="match status" value="1"/>
</dbReference>
<dbReference type="Gene3D" id="3.30.479.10">
    <property type="entry name" value="6-pyruvoyl tetrahydropterin synthase/QueD"/>
    <property type="match status" value="1"/>
</dbReference>
<dbReference type="InterPro" id="IPR007115">
    <property type="entry name" value="6-PTP_synth/QueD"/>
</dbReference>
<dbReference type="InterPro" id="IPR038418">
    <property type="entry name" value="6-PTP_synth/QueD_sf"/>
</dbReference>
<dbReference type="NCBIfam" id="TIGR00039">
    <property type="entry name" value="6PTHBS"/>
    <property type="match status" value="1"/>
</dbReference>
<dbReference type="NCBIfam" id="TIGR03367">
    <property type="entry name" value="queuosine_QueD"/>
    <property type="match status" value="1"/>
</dbReference>
<dbReference type="PANTHER" id="PTHR12589:SF7">
    <property type="entry name" value="6-PYRUVOYL TETRAHYDROBIOPTERIN SYNTHASE"/>
    <property type="match status" value="1"/>
</dbReference>
<dbReference type="PANTHER" id="PTHR12589">
    <property type="entry name" value="PYRUVOYL TETRAHYDROBIOPTERIN SYNTHASE"/>
    <property type="match status" value="1"/>
</dbReference>
<dbReference type="Pfam" id="PF01242">
    <property type="entry name" value="PTPS"/>
    <property type="match status" value="1"/>
</dbReference>
<dbReference type="PIRSF" id="PIRSF006113">
    <property type="entry name" value="PTP_synth"/>
    <property type="match status" value="1"/>
</dbReference>
<dbReference type="SUPFAM" id="SSF55620">
    <property type="entry name" value="Tetrahydrobiopterin biosynthesis enzymes-like"/>
    <property type="match status" value="1"/>
</dbReference>
<comment type="function">
    <text evidence="1">Catalyzes the conversion of 7,8-dihydroneopterin triphosphate (H2NTP) to 6-carboxy-5,6,7,8-tetrahydropterin (CPH4) and acetaldehyde.</text>
</comment>
<comment type="catalytic activity">
    <reaction>
        <text>7,8-dihydroneopterin 3'-triphosphate + H2O = 6-carboxy-5,6,7,8-tetrahydropterin + triphosphate + acetaldehyde + 2 H(+)</text>
        <dbReference type="Rhea" id="RHEA:27966"/>
        <dbReference type="ChEBI" id="CHEBI:15343"/>
        <dbReference type="ChEBI" id="CHEBI:15377"/>
        <dbReference type="ChEBI" id="CHEBI:15378"/>
        <dbReference type="ChEBI" id="CHEBI:18036"/>
        <dbReference type="ChEBI" id="CHEBI:58462"/>
        <dbReference type="ChEBI" id="CHEBI:61032"/>
        <dbReference type="EC" id="4.1.2.50"/>
    </reaction>
</comment>
<comment type="cofactor">
    <cofactor evidence="1">
        <name>Zn(2+)</name>
        <dbReference type="ChEBI" id="CHEBI:29105"/>
    </cofactor>
    <text evidence="1">Binds 1 zinc ion per subunit.</text>
</comment>
<comment type="pathway">
    <text>Purine metabolism; 7-cyano-7-deazaguanine biosynthesis.</text>
</comment>
<comment type="miscellaneous">
    <text evidence="1">The active site is at the interface between 2 subunits. The proton acceptor Cys is on one subunit, and the charge relay system is on the other subunit (By similarity).</text>
</comment>
<comment type="similarity">
    <text evidence="2">Belongs to the PTPS family. QueD subfamily.</text>
</comment>
<comment type="sequence caution" evidence="2">
    <conflict type="erroneous initiation">
        <sequence resource="EMBL-CDS" id="AAN44270"/>
    </conflict>
    <text>Truncated N-terminus.</text>
</comment>
<comment type="sequence caution" evidence="2">
    <conflict type="erroneous initiation">
        <sequence resource="EMBL-CDS" id="AAP18095"/>
    </conflict>
    <text>Truncated N-terminus.</text>
</comment>
<gene>
    <name type="primary">queD</name>
    <name type="synonym">ygcM</name>
    <name type="ordered locus">SF2781</name>
    <name type="ordered locus">S2974</name>
</gene>
<name>QUED_SHIFL</name>
<feature type="chain" id="PRO_0000057924" description="6-carboxy-5,6,7,8-tetrahydropterin synthase">
    <location>
        <begin position="1"/>
        <end position="121"/>
    </location>
</feature>
<feature type="active site" description="Proton acceptor" evidence="1">
    <location>
        <position position="27"/>
    </location>
</feature>
<feature type="active site" description="Charge relay system" evidence="1">
    <location>
        <position position="71"/>
    </location>
</feature>
<feature type="active site" description="Charge relay system" evidence="1">
    <location>
        <position position="110"/>
    </location>
</feature>
<feature type="binding site" evidence="1">
    <location>
        <position position="16"/>
    </location>
    <ligand>
        <name>Zn(2+)</name>
        <dbReference type="ChEBI" id="CHEBI:29105"/>
    </ligand>
</feature>
<feature type="binding site" evidence="1">
    <location>
        <position position="31"/>
    </location>
    <ligand>
        <name>Zn(2+)</name>
        <dbReference type="ChEBI" id="CHEBI:29105"/>
    </ligand>
</feature>
<feature type="binding site" evidence="1">
    <location>
        <position position="33"/>
    </location>
    <ligand>
        <name>Zn(2+)</name>
        <dbReference type="ChEBI" id="CHEBI:29105"/>
    </ligand>
</feature>
<protein>
    <recommendedName>
        <fullName>6-carboxy-5,6,7,8-tetrahydropterin synthase</fullName>
        <shortName>CPH4 synthase</shortName>
        <ecNumber>4.1.2.50</ecNumber>
    </recommendedName>
    <alternativeName>
        <fullName>Queuosine biosynthesis protein QueD</fullName>
    </alternativeName>
</protein>
<keyword id="KW-0456">Lyase</keyword>
<keyword id="KW-0479">Metal-binding</keyword>
<keyword id="KW-0671">Queuosine biosynthesis</keyword>
<keyword id="KW-1185">Reference proteome</keyword>
<keyword id="KW-0862">Zinc</keyword>
<accession>P65872</accession>
<accession>Q46903</accession>
<organism>
    <name type="scientific">Shigella flexneri</name>
    <dbReference type="NCBI Taxonomy" id="623"/>
    <lineage>
        <taxon>Bacteria</taxon>
        <taxon>Pseudomonadati</taxon>
        <taxon>Pseudomonadota</taxon>
        <taxon>Gammaproteobacteria</taxon>
        <taxon>Enterobacterales</taxon>
        <taxon>Enterobacteriaceae</taxon>
        <taxon>Shigella</taxon>
    </lineage>
</organism>